<gene>
    <name type="ordered locus">MIMI_R861</name>
</gene>
<proteinExistence type="inferred from homology"/>
<comment type="similarity">
    <text evidence="1">Belongs to the mimivirus R683/R861 family.</text>
</comment>
<reference key="1">
    <citation type="journal article" date="2004" name="Science">
        <title>The 1.2-megabase genome sequence of Mimivirus.</title>
        <authorList>
            <person name="Raoult D."/>
            <person name="Audic S."/>
            <person name="Robert C."/>
            <person name="Abergel C."/>
            <person name="Renesto P."/>
            <person name="Ogata H."/>
            <person name="La Scola B."/>
            <person name="Susan M."/>
            <person name="Claverie J.-M."/>
        </authorList>
    </citation>
    <scope>NUCLEOTIDE SEQUENCE [LARGE SCALE GENOMIC DNA]</scope>
    <source>
        <strain>Rowbotham-Bradford</strain>
    </source>
</reference>
<accession>Q5UQJ4</accession>
<evidence type="ECO:0000305" key="1"/>
<keyword id="KW-1185">Reference proteome</keyword>
<feature type="chain" id="PRO_0000071378" description="Uncharacterized protein R861">
    <location>
        <begin position="1"/>
        <end position="212"/>
    </location>
</feature>
<name>YR861_MIMIV</name>
<organismHost>
    <name type="scientific">Acanthamoeba polyphaga</name>
    <name type="common">Amoeba</name>
    <dbReference type="NCBI Taxonomy" id="5757"/>
</organismHost>
<sequence length="212" mass="25268">MDILGNIPSQYWIIVSNTFGNNTSFEFNYASLKEIYDIEIDYFNYVINHLVKETYDSGKILTTLKMLEQIYIKLYDYTKLNLYQESIDYVYIEIQRWFKMNSHDGNFSLETKQMELLKYIYGREQCKYAHELVEQAYVHLSNENGNNGLVASWITYANSYFGGFYKKNAFEIISEIHESQKNNIVNKLKQITVDEVKPLDEVYKKWMSLKIY</sequence>
<protein>
    <recommendedName>
        <fullName>Uncharacterized protein R861</fullName>
    </recommendedName>
</protein>
<organism>
    <name type="scientific">Acanthamoeba polyphaga mimivirus</name>
    <name type="common">APMV</name>
    <dbReference type="NCBI Taxonomy" id="212035"/>
    <lineage>
        <taxon>Viruses</taxon>
        <taxon>Varidnaviria</taxon>
        <taxon>Bamfordvirae</taxon>
        <taxon>Nucleocytoviricota</taxon>
        <taxon>Megaviricetes</taxon>
        <taxon>Imitervirales</taxon>
        <taxon>Mimiviridae</taxon>
        <taxon>Megamimivirinae</taxon>
        <taxon>Mimivirus</taxon>
        <taxon>Mimivirus bradfordmassiliense</taxon>
    </lineage>
</organism>
<dbReference type="EMBL" id="AY653733">
    <property type="protein sequence ID" value="AAV51119.1"/>
    <property type="molecule type" value="Genomic_DNA"/>
</dbReference>
<dbReference type="KEGG" id="vg:9925522"/>
<dbReference type="OrthoDB" id="30714at10239"/>
<dbReference type="Proteomes" id="UP000001134">
    <property type="component" value="Genome"/>
</dbReference>